<evidence type="ECO:0000255" key="1">
    <source>
        <dbReference type="PROSITE-ProRule" id="PRU00285"/>
    </source>
</evidence>
<evidence type="ECO:0000256" key="2">
    <source>
        <dbReference type="SAM" id="MobiDB-lite"/>
    </source>
</evidence>
<evidence type="ECO:0000269" key="3">
    <source>
    </source>
</evidence>
<evidence type="ECO:0000269" key="4">
    <source>
    </source>
</evidence>
<evidence type="ECO:0000269" key="5">
    <source>
    </source>
</evidence>
<evidence type="ECO:0000269" key="6">
    <source>
    </source>
</evidence>
<evidence type="ECO:0000303" key="7">
    <source>
    </source>
</evidence>
<evidence type="ECO:0000303" key="8">
    <source>
    </source>
</evidence>
<evidence type="ECO:0000303" key="9">
    <source>
    </source>
</evidence>
<evidence type="ECO:0000305" key="10"/>
<evidence type="ECO:0000312" key="11">
    <source>
        <dbReference type="Araport" id="AT1G54840"/>
    </source>
</evidence>
<evidence type="ECO:0000312" key="12">
    <source>
        <dbReference type="EMBL" id="AAC64893.1"/>
    </source>
</evidence>
<evidence type="ECO:0000312" key="13">
    <source>
        <dbReference type="EMBL" id="AAG51105.1"/>
    </source>
</evidence>
<evidence type="ECO:0000312" key="14">
    <source>
        <dbReference type="EMBL" id="AAM13019.1"/>
    </source>
</evidence>
<accession>Q8RWL4</accession>
<accession>F4HYL2</accession>
<accession>Q9ZVL2</accession>
<reference key="1">
    <citation type="journal article" date="2000" name="Nature">
        <title>Sequence and analysis of chromosome 1 of the plant Arabidopsis thaliana.</title>
        <authorList>
            <person name="Theologis A."/>
            <person name="Ecker J.R."/>
            <person name="Palm C.J."/>
            <person name="Federspiel N.A."/>
            <person name="Kaul S."/>
            <person name="White O."/>
            <person name="Alonso J."/>
            <person name="Altafi H."/>
            <person name="Araujo R."/>
            <person name="Bowman C.L."/>
            <person name="Brooks S.Y."/>
            <person name="Buehler E."/>
            <person name="Chan A."/>
            <person name="Chao Q."/>
            <person name="Chen H."/>
            <person name="Cheuk R.F."/>
            <person name="Chin C.W."/>
            <person name="Chung M.K."/>
            <person name="Conn L."/>
            <person name="Conway A.B."/>
            <person name="Conway A.R."/>
            <person name="Creasy T.H."/>
            <person name="Dewar K."/>
            <person name="Dunn P."/>
            <person name="Etgu P."/>
            <person name="Feldblyum T.V."/>
            <person name="Feng J.-D."/>
            <person name="Fong B."/>
            <person name="Fujii C.Y."/>
            <person name="Gill J.E."/>
            <person name="Goldsmith A.D."/>
            <person name="Haas B."/>
            <person name="Hansen N.F."/>
            <person name="Hughes B."/>
            <person name="Huizar L."/>
            <person name="Hunter J.L."/>
            <person name="Jenkins J."/>
            <person name="Johnson-Hopson C."/>
            <person name="Khan S."/>
            <person name="Khaykin E."/>
            <person name="Kim C.J."/>
            <person name="Koo H.L."/>
            <person name="Kremenetskaia I."/>
            <person name="Kurtz D.B."/>
            <person name="Kwan A."/>
            <person name="Lam B."/>
            <person name="Langin-Hooper S."/>
            <person name="Lee A."/>
            <person name="Lee J.M."/>
            <person name="Lenz C.A."/>
            <person name="Li J.H."/>
            <person name="Li Y.-P."/>
            <person name="Lin X."/>
            <person name="Liu S.X."/>
            <person name="Liu Z.A."/>
            <person name="Luros J.S."/>
            <person name="Maiti R."/>
            <person name="Marziali A."/>
            <person name="Militscher J."/>
            <person name="Miranda M."/>
            <person name="Nguyen M."/>
            <person name="Nierman W.C."/>
            <person name="Osborne B.I."/>
            <person name="Pai G."/>
            <person name="Peterson J."/>
            <person name="Pham P.K."/>
            <person name="Rizzo M."/>
            <person name="Rooney T."/>
            <person name="Rowley D."/>
            <person name="Sakano H."/>
            <person name="Salzberg S.L."/>
            <person name="Schwartz J.R."/>
            <person name="Shinn P."/>
            <person name="Southwick A.M."/>
            <person name="Sun H."/>
            <person name="Tallon L.J."/>
            <person name="Tambunga G."/>
            <person name="Toriumi M.J."/>
            <person name="Town C.D."/>
            <person name="Utterback T."/>
            <person name="Van Aken S."/>
            <person name="Vaysberg M."/>
            <person name="Vysotskaia V.S."/>
            <person name="Walker M."/>
            <person name="Wu D."/>
            <person name="Yu G."/>
            <person name="Fraser C.M."/>
            <person name="Venter J.C."/>
            <person name="Davis R.W."/>
        </authorList>
    </citation>
    <scope>NUCLEOTIDE SEQUENCE [LARGE SCALE GENOMIC DNA]</scope>
    <source>
        <strain>cv. Columbia</strain>
    </source>
</reference>
<reference key="2">
    <citation type="journal article" date="2017" name="Plant J.">
        <title>Araport11: a complete reannotation of the Arabidopsis thaliana reference genome.</title>
        <authorList>
            <person name="Cheng C.Y."/>
            <person name="Krishnakumar V."/>
            <person name="Chan A.P."/>
            <person name="Thibaud-Nissen F."/>
            <person name="Schobel S."/>
            <person name="Town C.D."/>
        </authorList>
    </citation>
    <scope>GENOME REANNOTATION</scope>
    <source>
        <strain>cv. Columbia</strain>
    </source>
</reference>
<reference key="3">
    <citation type="journal article" date="2003" name="Science">
        <title>Empirical analysis of transcriptional activity in the Arabidopsis genome.</title>
        <authorList>
            <person name="Yamada K."/>
            <person name="Lim J."/>
            <person name="Dale J.M."/>
            <person name="Chen H."/>
            <person name="Shinn P."/>
            <person name="Palm C.J."/>
            <person name="Southwick A.M."/>
            <person name="Wu H.C."/>
            <person name="Kim C.J."/>
            <person name="Nguyen M."/>
            <person name="Pham P.K."/>
            <person name="Cheuk R.F."/>
            <person name="Karlin-Newmann G."/>
            <person name="Liu S.X."/>
            <person name="Lam B."/>
            <person name="Sakano H."/>
            <person name="Wu T."/>
            <person name="Yu G."/>
            <person name="Miranda M."/>
            <person name="Quach H.L."/>
            <person name="Tripp M."/>
            <person name="Chang C.H."/>
            <person name="Lee J.M."/>
            <person name="Toriumi M.J."/>
            <person name="Chan M.M."/>
            <person name="Tang C.C."/>
            <person name="Onodera C.S."/>
            <person name="Deng J.M."/>
            <person name="Akiyama K."/>
            <person name="Ansari Y."/>
            <person name="Arakawa T."/>
            <person name="Banh J."/>
            <person name="Banno F."/>
            <person name="Bowser L."/>
            <person name="Brooks S.Y."/>
            <person name="Carninci P."/>
            <person name="Chao Q."/>
            <person name="Choy N."/>
            <person name="Enju A."/>
            <person name="Goldsmith A.D."/>
            <person name="Gurjal M."/>
            <person name="Hansen N.F."/>
            <person name="Hayashizaki Y."/>
            <person name="Johnson-Hopson C."/>
            <person name="Hsuan V.W."/>
            <person name="Iida K."/>
            <person name="Karnes M."/>
            <person name="Khan S."/>
            <person name="Koesema E."/>
            <person name="Ishida J."/>
            <person name="Jiang P.X."/>
            <person name="Jones T."/>
            <person name="Kawai J."/>
            <person name="Kamiya A."/>
            <person name="Meyers C."/>
            <person name="Nakajima M."/>
            <person name="Narusaka M."/>
            <person name="Seki M."/>
            <person name="Sakurai T."/>
            <person name="Satou M."/>
            <person name="Tamse R."/>
            <person name="Vaysberg M."/>
            <person name="Wallender E.K."/>
            <person name="Wong C."/>
            <person name="Yamamura Y."/>
            <person name="Yuan S."/>
            <person name="Shinozaki K."/>
            <person name="Davis R.W."/>
            <person name="Theologis A."/>
            <person name="Ecker J.R."/>
        </authorList>
    </citation>
    <scope>NUCLEOTIDE SEQUENCE [LARGE SCALE MRNA]</scope>
    <source>
        <strain>cv. Columbia</strain>
    </source>
</reference>
<reference key="4">
    <citation type="journal article" date="2006" name="Plant Physiol.">
        <title>Identification and characterization of a stress-inducible and a constitutive small heat-shock protein targeted to the matrix of plant peroxisomes.</title>
        <authorList>
            <person name="Ma C."/>
            <person name="Haslbeck M."/>
            <person name="Babujee L."/>
            <person name="Jahn O."/>
            <person name="Reumann S."/>
        </authorList>
    </citation>
    <scope>NOMENCLATURE</scope>
</reference>
<reference key="5">
    <citation type="journal article" date="2014" name="Mol. Cell">
        <title>Regulation of active DNA demethylation by an alpha-crystallin domain protein in Arabidopsis.</title>
        <authorList>
            <person name="Qian W."/>
            <person name="Miki D."/>
            <person name="Lei M."/>
            <person name="Zhu X."/>
            <person name="Zhang H."/>
            <person name="Liu Y."/>
            <person name="Li Y."/>
            <person name="Lang Z."/>
            <person name="Wang J."/>
            <person name="Tang K."/>
            <person name="Liu R."/>
            <person name="Zhu J.K."/>
        </authorList>
    </citation>
    <scope>FUNCTION</scope>
    <scope>DISRUPTION PHENOTYPE</scope>
    <scope>MUTAGENESIS OF ASP-49; GLY-246; GLY-260 AND GLY-276</scope>
    <scope>INDUCTION BY HEAT</scope>
    <scope>SUBCELLULAR LOCATION</scope>
    <scope>INTERACTION WITH IDM1</scope>
</reference>
<reference key="6">
    <citation type="journal article" date="2014" name="Plant Cell">
        <title>REPRESSOR OF SILENCING5 encodes a member of the small heat shock protein family and is required for DNA demethylation in Arabidopsis.</title>
        <authorList>
            <person name="Zhao Y."/>
            <person name="Xie S."/>
            <person name="Li X."/>
            <person name="Wang C."/>
            <person name="Chen Z."/>
            <person name="Lai J."/>
            <person name="Gong Z."/>
        </authorList>
    </citation>
    <scope>FUNCTION</scope>
    <scope>DISRUPTION PHENOTYPE</scope>
    <scope>MUTAGENESIS OF GLY-246</scope>
    <scope>SUBUNIT</scope>
    <scope>SUBCELLULAR LOCATION</scope>
    <scope>TISSUE SPECIFICITY</scope>
    <scope>INTERACTION WITH IDM1</scope>
    <scope>INDUCTION BY HEAT</scope>
</reference>
<reference key="7">
    <citation type="journal article" date="2015" name="Mol. Cell">
        <title>The methyl-CpG-binding protein MBD7 facilitates active DNA demethylation to limit DNA hyper-methylation and transcriptional gene silencing.</title>
        <authorList>
            <person name="Lang Z."/>
            <person name="Lei M."/>
            <person name="Wang X."/>
            <person name="Tang K."/>
            <person name="Miki D."/>
            <person name="Zhang H."/>
            <person name="Mangrauthia S.K."/>
            <person name="Liu W."/>
            <person name="Nie W."/>
            <person name="Ma G."/>
            <person name="Yan J."/>
            <person name="Duan C.G."/>
            <person name="Hsu C.C."/>
            <person name="Wang C."/>
            <person name="Tao W.A."/>
            <person name="Gong Z."/>
            <person name="Zhu J.K."/>
        </authorList>
    </citation>
    <scope>INTERACTION WITH MBD7; IDM1 AND IDM3</scope>
</reference>
<reference key="8">
    <citation type="journal article" date="2015" name="Plant Physiol.">
        <title>Methyl-CpG-binding domain protein MBD7 is required for active DNA demethylation in Arabidopsis.</title>
        <authorList>
            <person name="Wang C."/>
            <person name="Dong X."/>
            <person name="Jin D."/>
            <person name="Zhao Y."/>
            <person name="Xie S."/>
            <person name="Li X."/>
            <person name="He X."/>
            <person name="Lang Z."/>
            <person name="Lai J."/>
            <person name="Zhu J.K."/>
            <person name="Gong Z."/>
        </authorList>
    </citation>
    <scope>INTERACTION WITH MBD7</scope>
    <scope>SUBCELLULAR LOCATION</scope>
</reference>
<gene>
    <name evidence="9" type="primary">IDM2</name>
    <name evidence="7" type="synonym">ACD39.4</name>
    <name evidence="8" type="synonym">ROS5</name>
    <name evidence="11" type="ordered locus">At1g54840</name>
    <name evidence="13" type="ORF">F14C21.38</name>
    <name evidence="12" type="ORF">T22H22.23</name>
</gene>
<organism evidence="14">
    <name type="scientific">Arabidopsis thaliana</name>
    <name type="common">Mouse-ear cress</name>
    <dbReference type="NCBI Taxonomy" id="3702"/>
    <lineage>
        <taxon>Eukaryota</taxon>
        <taxon>Viridiplantae</taxon>
        <taxon>Streptophyta</taxon>
        <taxon>Embryophyta</taxon>
        <taxon>Tracheophyta</taxon>
        <taxon>Spermatophyta</taxon>
        <taxon>Magnoliopsida</taxon>
        <taxon>eudicotyledons</taxon>
        <taxon>Gunneridae</taxon>
        <taxon>Pentapetalae</taxon>
        <taxon>rosids</taxon>
        <taxon>malvids</taxon>
        <taxon>Brassicales</taxon>
        <taxon>Brassicaceae</taxon>
        <taxon>Camelineae</taxon>
        <taxon>Arabidopsis</taxon>
    </lineage>
</organism>
<dbReference type="EMBL" id="AC005388">
    <property type="protein sequence ID" value="AAC64893.1"/>
    <property type="status" value="ALT_INIT"/>
    <property type="molecule type" value="Genomic_DNA"/>
</dbReference>
<dbReference type="EMBL" id="AC069144">
    <property type="protein sequence ID" value="AAG51105.1"/>
    <property type="status" value="ALT_INIT"/>
    <property type="molecule type" value="Genomic_DNA"/>
</dbReference>
<dbReference type="EMBL" id="CP002684">
    <property type="protein sequence ID" value="AEE33154.1"/>
    <property type="molecule type" value="Genomic_DNA"/>
</dbReference>
<dbReference type="EMBL" id="CP002684">
    <property type="protein sequence ID" value="AEE33155.1"/>
    <property type="molecule type" value="Genomic_DNA"/>
</dbReference>
<dbReference type="EMBL" id="AY093020">
    <property type="protein sequence ID" value="AAM13019.1"/>
    <property type="molecule type" value="mRNA"/>
</dbReference>
<dbReference type="EMBL" id="AY128943">
    <property type="protein sequence ID" value="AAM91343.1"/>
    <property type="molecule type" value="mRNA"/>
</dbReference>
<dbReference type="RefSeq" id="NP_175881.2">
    <molecule id="Q8RWL4-1"/>
    <property type="nucleotide sequence ID" value="NM_104357.5"/>
</dbReference>
<dbReference type="RefSeq" id="NP_974031.1">
    <molecule id="Q8RWL4-2"/>
    <property type="nucleotide sequence ID" value="NM_202302.2"/>
</dbReference>
<dbReference type="SMR" id="Q8RWL4"/>
<dbReference type="FunCoup" id="Q8RWL4">
    <property type="interactions" value="63"/>
</dbReference>
<dbReference type="IntAct" id="Q8RWL4">
    <property type="interactions" value="1"/>
</dbReference>
<dbReference type="STRING" id="3702.Q8RWL4"/>
<dbReference type="PaxDb" id="3702-AT1G54840.1"/>
<dbReference type="ProteomicsDB" id="232125">
    <molecule id="Q8RWL4-1"/>
</dbReference>
<dbReference type="EnsemblPlants" id="AT1G54840.1">
    <molecule id="Q8RWL4-1"/>
    <property type="protein sequence ID" value="AT1G54840.1"/>
    <property type="gene ID" value="AT1G54840"/>
</dbReference>
<dbReference type="EnsemblPlants" id="AT1G54840.2">
    <molecule id="Q8RWL4-2"/>
    <property type="protein sequence ID" value="AT1G54840.2"/>
    <property type="gene ID" value="AT1G54840"/>
</dbReference>
<dbReference type="GeneID" id="841923"/>
<dbReference type="Gramene" id="AT1G54840.1">
    <molecule id="Q8RWL4-1"/>
    <property type="protein sequence ID" value="AT1G54840.1"/>
    <property type="gene ID" value="AT1G54840"/>
</dbReference>
<dbReference type="Gramene" id="AT1G54840.2">
    <molecule id="Q8RWL4-2"/>
    <property type="protein sequence ID" value="AT1G54840.2"/>
    <property type="gene ID" value="AT1G54840"/>
</dbReference>
<dbReference type="KEGG" id="ath:AT1G54840"/>
<dbReference type="Araport" id="AT1G54840"/>
<dbReference type="TAIR" id="AT1G54840">
    <property type="gene designation" value="IDM2"/>
</dbReference>
<dbReference type="eggNOG" id="ENOG502QT4Y">
    <property type="taxonomic scope" value="Eukaryota"/>
</dbReference>
<dbReference type="HOGENOM" id="CLU_043084_0_0_1"/>
<dbReference type="InParanoid" id="Q8RWL4"/>
<dbReference type="OMA" id="PVHPHEF"/>
<dbReference type="OrthoDB" id="1927234at2759"/>
<dbReference type="PhylomeDB" id="Q8RWL4"/>
<dbReference type="PRO" id="PR:Q8RWL4"/>
<dbReference type="Proteomes" id="UP000006548">
    <property type="component" value="Chromosome 1"/>
</dbReference>
<dbReference type="ExpressionAtlas" id="Q8RWL4">
    <property type="expression patterns" value="baseline and differential"/>
</dbReference>
<dbReference type="GO" id="GO:0005654">
    <property type="term" value="C:nucleoplasm"/>
    <property type="evidence" value="ECO:0007669"/>
    <property type="project" value="UniProtKB-SubCell"/>
</dbReference>
<dbReference type="GO" id="GO:0005634">
    <property type="term" value="C:nucleus"/>
    <property type="evidence" value="ECO:0000314"/>
    <property type="project" value="TAIR"/>
</dbReference>
<dbReference type="CDD" id="cd06464">
    <property type="entry name" value="ACD_sHsps-like"/>
    <property type="match status" value="1"/>
</dbReference>
<dbReference type="FunFam" id="2.60.40.790:FF:000049">
    <property type="entry name" value="Increased DNA methylation 3"/>
    <property type="match status" value="1"/>
</dbReference>
<dbReference type="Gene3D" id="2.60.40.790">
    <property type="match status" value="1"/>
</dbReference>
<dbReference type="InterPro" id="IPR002068">
    <property type="entry name" value="A-crystallin/Hsp20_dom"/>
</dbReference>
<dbReference type="InterPro" id="IPR008978">
    <property type="entry name" value="HSP20-like_chaperone"/>
</dbReference>
<dbReference type="InterPro" id="IPR039321">
    <property type="entry name" value="IDM2/3-like"/>
</dbReference>
<dbReference type="PANTHER" id="PTHR34661:SF3">
    <property type="entry name" value="INCREASED DNA METHYLATION 2"/>
    <property type="match status" value="1"/>
</dbReference>
<dbReference type="PANTHER" id="PTHR34661">
    <property type="entry name" value="INCREASED DNA METHYLATION 3"/>
    <property type="match status" value="1"/>
</dbReference>
<dbReference type="SUPFAM" id="SSF49764">
    <property type="entry name" value="HSP20-like chaperones"/>
    <property type="match status" value="1"/>
</dbReference>
<dbReference type="PROSITE" id="PS01031">
    <property type="entry name" value="SHSP"/>
    <property type="match status" value="1"/>
</dbReference>
<keyword id="KW-0025">Alternative splicing</keyword>
<keyword id="KW-0539">Nucleus</keyword>
<keyword id="KW-1185">Reference proteome</keyword>
<keyword id="KW-0346">Stress response</keyword>
<keyword id="KW-0804">Transcription</keyword>
<keyword id="KW-0805">Transcription regulation</keyword>
<feature type="chain" id="PRO_0000432655" description="Increased DNA methylation 2">
    <location>
        <begin position="1"/>
        <end position="349"/>
    </location>
</feature>
<feature type="domain" description="sHSP" evidence="1">
    <location>
        <begin position="233"/>
        <end position="349"/>
    </location>
</feature>
<feature type="region of interest" description="Disordered" evidence="2">
    <location>
        <begin position="210"/>
        <end position="230"/>
    </location>
</feature>
<feature type="splice variant" id="VSP_057559" description="In isoform 2.">
    <original>RYF</original>
    <variation>TVK</variation>
    <location>
        <begin position="266"/>
        <end position="268"/>
    </location>
</feature>
<feature type="splice variant" id="VSP_057560" description="In isoform 2.">
    <location>
        <begin position="269"/>
        <end position="349"/>
    </location>
</feature>
<feature type="mutagenesis site" description="Loss of function." evidence="4">
    <original>D</original>
    <variation>E</variation>
    <location>
        <position position="49"/>
    </location>
</feature>
<feature type="mutagenesis site" description="Loss of function, but no effect on the oligomer formation." evidence="3 4">
    <original>G</original>
    <variation>D</variation>
    <location>
        <position position="246"/>
    </location>
</feature>
<feature type="mutagenesis site" description="Loss of function." evidence="4">
    <original>G</original>
    <variation>D</variation>
    <location>
        <position position="260"/>
    </location>
</feature>
<feature type="mutagenesis site" description="In idm2-3; DNA hypermethylation and loss of transgenes transcriptional silencing." evidence="4">
    <original>G</original>
    <variation>E</variation>
    <location>
        <position position="276"/>
    </location>
</feature>
<sequence>MSDTMPEIVSPLVAENSQEQEESVLISLDIEEDKLFLLHFIIGTYFGPDLRKQHHRPKQSAFQIQALKNVVVDELSGSLMKRAELERVYYHIIRNVDPSLVMKPKKLREYFNAKRNDSNRDYPLFVDLFPRKLHPETHVRHKFKFIRSIVFINDPDTSCMREECVARFKRLTGLDSFALSLSVDVTKSNGVVAANEVKVEIDESVEPVKEDNAGTCTSGEESDVAAKPEVKSEAHGGLMVGLMDIGECDDAYLFRVSLPGVKRDERYFSCEVEDNGKVLVRGVTTTGGKRVKRYSHVFEMQTRSLCPPGNFSVSFRLPGPVHPHEFSGNFGTDGILEGVVMKNLQKQTV</sequence>
<proteinExistence type="evidence at protein level"/>
<name>IDM2_ARATH</name>
<comment type="function">
    <text evidence="3 4">Prevents DNA hypermethylation and transcriptional silencing of transgenes and of some endogenous genes (PubMed:24920332, PubMed:25002145). May act as a molecular chaperone of IDM1, regulating its H3K18 acetylation activity (PubMed:24920332, PubMed:25002145).</text>
</comment>
<comment type="subunit">
    <text evidence="3 4 5 6">Homodimer or oligomer (PubMed:24920332). May form an 16-mer complex (PubMed:24920332). Interacts with MBD7 (via C-terminus) (PubMed:25593350, PubMed:25684209). Interacts with IDM1 (via N-terminus) (PubMed:24920332, PubMed:25002145, PubMed:25684209). Interacts with IMD3 (PubMed:25684209). Part of a complex made of MBD7, IDM1, IDM2, IDM3 and ROS1 (PubMed:24920332, PubMed:25684209).</text>
</comment>
<comment type="subcellular location">
    <subcellularLocation>
        <location evidence="3 4 5">Nucleus</location>
        <location evidence="3 4 5">Nucleoplasm</location>
    </subcellularLocation>
    <text evidence="3 4">Colocalizes with IDM1 within nucleoplasmic and nucleolar foci.</text>
</comment>
<comment type="alternative products">
    <event type="alternative splicing"/>
    <isoform>
        <id>Q8RWL4-1</id>
        <name>1</name>
        <name>Acd39.4</name>
        <sequence type="displayed"/>
    </isoform>
    <isoform>
        <id>Q8RWL4-2</id>
        <name>2</name>
        <name>Acd30.4</name>
        <sequence type="described" ref="VSP_057559 VSP_057560"/>
    </isoform>
</comment>
<comment type="tissue specificity">
    <text evidence="3">Expressed in cotyledons and hypocotyls in young seedlings.</text>
</comment>
<comment type="induction">
    <text evidence="3 4">Not regulated by heat.</text>
</comment>
<comment type="disruption phenotype">
    <text evidence="3 4">No visible growth or developmental defects under normal growth conditions (PubMed:24920332). DNA hypermethylation (PubMed:25002145).</text>
</comment>
<comment type="similarity">
    <text evidence="1">Belongs to the small heat shock protein (HSP20) family.</text>
</comment>
<comment type="sequence caution" evidence="10">
    <conflict type="erroneous initiation">
        <sequence resource="EMBL-CDS" id="AAC64893"/>
    </conflict>
    <text>Truncated N-terminus.</text>
</comment>
<comment type="sequence caution" evidence="10">
    <conflict type="erroneous initiation">
        <sequence resource="EMBL-CDS" id="AAG51105"/>
    </conflict>
    <text>Truncated N-terminus.</text>
</comment>
<protein>
    <recommendedName>
        <fullName evidence="9">Increased DNA methylation 2</fullName>
    </recommendedName>
    <alternativeName>
        <fullName evidence="7">Alpha-crystallin domain-containing protein 39.4</fullName>
        <shortName evidence="7">AtAcd39.4</shortName>
    </alternativeName>
    <alternativeName>
        <fullName evidence="8">Protein ROS5</fullName>
    </alternativeName>
    <alternativeName>
        <fullName evidence="8">Repressor of silencing 5</fullName>
    </alternativeName>
</protein>